<protein>
    <recommendedName>
        <fullName evidence="13">Collagen alpha-2(IX) chain</fullName>
    </recommendedName>
</protein>
<name>CO9A2_HUMAN</name>
<gene>
    <name evidence="14" type="primary">COL9A2</name>
</gene>
<sequence length="689" mass="65131">MAAATASPRSLLVLLQVVVLALAQIRGPPGERGPPGPPGPPGVPGSDGIDGDNGPPGKAGPPGPKGEPGKAGPDGPDGKPGIDGLTGAKGEPGPMGIPGVKGQPGLPGPPGLPGPGFAGPPGPPGPVGLPGEIGIRGPKGDPGPDGPSGPPGPPGKPGRPGTIQGLEGSADFLCPTNCPPGMKGPPGLQGVKGHAGKRGILGDPGHQGKPGPKGDVGASGEQGIPGPPGPQGIRGYPGMAGPKGETGPHGYKGMVGAIGATGPPGEEGPRGPPGRAGEKGDEGSPGIRGPQGITGPKGATGPPGINGKDGTPGTPGMKGSAGQAGQPGSPGHQGLAGVPGQPGTKGGPGDQGEPGPQGLPGFSGPPGKEGEPGPRGEIGPQGIMGQKGDQGERGPVGQPGPQGRQGPKGEQGPPGIPGPQGLPGVKGDKGSPGKTGPRGKVGDPGVAGLPGEKGEKGESGEPGPKGQQGVRGEPGYPGPSGDAGAPGVQGYPGPPGPRGLAGNRGVPGQPGRQGVEGRDATDQHIVDVALKMLQEQLAEVAVSAKREALGAVGMMGPPGPPGPPGYPGKQGPHGHPGPRGVPGIVGAVGQIGNTGPKGKRGEKGDPGEVGRGHPGMPGPPGIPGLPGRPGQAINGKDGDRGSPGAPGEAGRPGLPGPVGLPGFCEPAACLGASAYASARLTEPGSIKGP</sequence>
<comment type="function">
    <text>Structural component of hyaline cartilage and vitreous of the eye.</text>
</comment>
<comment type="subunit">
    <text evidence="2">Heterotrimer of an alpha 1(IX), an alpha 2(IX) and an alpha 3(IX) chain (By similarity). The chains are linked to each other by interchain disulfide bonds (By similarity). Trimers are also cross-linked via hydroxylysines (By similarity).</text>
</comment>
<comment type="interaction">
    <interactant intactId="EBI-714971">
        <id>Q14055</id>
    </interactant>
    <interactant intactId="EBI-16439278">
        <id>Q6FHY5</id>
        <label>MEOX2</label>
    </interactant>
    <organismsDiffer>false</organismsDiffer>
    <experiments>3</experiments>
</comment>
<comment type="interaction">
    <interactant intactId="EBI-714971">
        <id>Q14055</id>
    </interactant>
    <interactant intactId="EBI-741480">
        <id>Q9UMX0</id>
        <label>UBQLN1</label>
    </interactant>
    <organismsDiffer>false</organismsDiffer>
    <experiments>3</experiments>
</comment>
<comment type="interaction">
    <interactant intactId="EBI-714971">
        <id>Q14055</id>
    </interactant>
    <interactant intactId="EBI-947187">
        <id>Q9UHD9</id>
        <label>UBQLN2</label>
    </interactant>
    <organismsDiffer>false</organismsDiffer>
    <experiments>3</experiments>
</comment>
<comment type="subcellular location">
    <subcellularLocation>
        <location evidence="1">Secreted</location>
        <location evidence="1">Extracellular space</location>
        <location evidence="1">Extracellular matrix</location>
    </subcellularLocation>
</comment>
<comment type="PTM">
    <text>Covalently linked to the telopeptides of type II collagen by lysine-derived cross-links.</text>
</comment>
<comment type="PTM">
    <text>Prolines at the third position of the tripeptide repeating unit (G-X-Y) are hydroxylated in some or all of the chains.</text>
</comment>
<comment type="disease" evidence="6">
    <disease id="DI-00786">
        <name>Multiple epiphyseal dysplasia 2</name>
        <acronym>EDM2</acronym>
        <description>A generalized skeletal dysplasia associated with significant morbidity. Joint pain, joint deformity, waddling gait, and short stature are the main clinical signs and symptoms. Radiological examination of the skeleton shows delayed, irregular mineralization of the epiphyseal ossification centers and of the centers of the carpal and tarsal bones. Multiple epiphyseal dysplasia is broadly categorized into the more severe Fairbank and the milder Ribbing types. The Fairbank type is characterized by shortness of stature, short and stubby fingers, small epiphyses in several joints, including the knee, ankle, hand, and hip. The Ribbing type is confined predominantly to the hip joints and is characterized by hands that are normal and stature that is normal or near-normal.</description>
        <dbReference type="MIM" id="600204"/>
    </disease>
    <text>The disease is caused by variants affecting the gene represented in this entry.</text>
</comment>
<comment type="disease" evidence="7">
    <disease id="DI-01829">
        <name>Intervertebral disc disease</name>
        <acronym>IDD</acronym>
        <description>A common musculo-skeletal disorder caused by degeneration of intervertebral disks of the lumbar spine. It results in low-back pain and unilateral leg pain.</description>
        <dbReference type="MIM" id="603932"/>
    </disease>
    <text>Disease susceptibility is associated with variants affecting the gene represented in this entry.</text>
</comment>
<comment type="disease" evidence="9 11 12">
    <disease id="DI-03280">
        <name>Stickler syndrome 5</name>
        <acronym>STL5</acronym>
        <description>An autosomal recessive form of Stickler syndrome, an inherited disorder that associates ocular signs with more or less complete forms of Pierre Robin sequence, bone disorders and sensorineural deafness. STL5 is characterized by high myopia, vitreoretinal degeneration, retinal detachment, mild to moderate sensorineural hearing loss, short stature in childhood, and absence of cleft palate and Pierre Robin sequence.</description>
        <dbReference type="MIM" id="614284"/>
    </disease>
    <text>The disease is caused by variants affecting the gene represented in this entry.</text>
</comment>
<comment type="similarity">
    <text evidence="13">Belongs to the fibril-associated collagens with interrupted helices (FACIT) family.</text>
</comment>
<evidence type="ECO:0000250" key="1"/>
<evidence type="ECO:0000250" key="2">
    <source>
        <dbReference type="UniProtKB" id="C0HLN2"/>
    </source>
</evidence>
<evidence type="ECO:0000250" key="3">
    <source>
        <dbReference type="UniProtKB" id="P12108"/>
    </source>
</evidence>
<evidence type="ECO:0000255" key="4"/>
<evidence type="ECO:0000256" key="5">
    <source>
        <dbReference type="SAM" id="MobiDB-lite"/>
    </source>
</evidence>
<evidence type="ECO:0000269" key="6">
    <source>
    </source>
</evidence>
<evidence type="ECO:0000269" key="7">
    <source>
    </source>
</evidence>
<evidence type="ECO:0000269" key="8">
    <source>
    </source>
</evidence>
<evidence type="ECO:0000269" key="9">
    <source>
    </source>
</evidence>
<evidence type="ECO:0000269" key="10">
    <source>
    </source>
</evidence>
<evidence type="ECO:0000269" key="11">
    <source>
    </source>
</evidence>
<evidence type="ECO:0000269" key="12">
    <source>
    </source>
</evidence>
<evidence type="ECO:0000305" key="13"/>
<evidence type="ECO:0000312" key="14">
    <source>
        <dbReference type="HGNC" id="HGNC:2218"/>
    </source>
</evidence>
<evidence type="ECO:0007829" key="15">
    <source>
        <dbReference type="PDB" id="5CTD"/>
    </source>
</evidence>
<feature type="signal peptide" evidence="4">
    <location>
        <begin position="1"/>
        <end position="23"/>
    </location>
</feature>
<feature type="chain" id="PRO_0000005837" description="Collagen alpha-2(IX) chain">
    <location>
        <begin position="24"/>
        <end position="689"/>
    </location>
</feature>
<feature type="region of interest" description="Disordered" evidence="5">
    <location>
        <begin position="26"/>
        <end position="518"/>
    </location>
</feature>
<feature type="region of interest" description="Triple-helical region 4 (COL4)">
    <location>
        <begin position="27"/>
        <end position="163"/>
    </location>
</feature>
<feature type="region of interest" description="Nonhelical region 4 (NC4)">
    <location>
        <begin position="164"/>
        <end position="180"/>
    </location>
</feature>
<feature type="region of interest" description="Triple-helical region 3 (COL3)">
    <location>
        <begin position="181"/>
        <end position="519"/>
    </location>
</feature>
<feature type="region of interest" description="Nonhelical region 3 (NC3)">
    <location>
        <begin position="520"/>
        <end position="549"/>
    </location>
</feature>
<feature type="region of interest" description="Triple-helical region 2 (COL2)">
    <location>
        <begin position="550"/>
        <end position="632"/>
    </location>
</feature>
<feature type="region of interest" description="Disordered" evidence="5">
    <location>
        <begin position="554"/>
        <end position="663"/>
    </location>
</feature>
<feature type="region of interest" description="Nonhelical region 2 (NC2)">
    <location>
        <begin position="633"/>
        <end position="634"/>
    </location>
</feature>
<feature type="region of interest" description="Triple-helical region 1 (COL1)">
    <location>
        <begin position="635"/>
        <end position="664"/>
    </location>
</feature>
<feature type="region of interest" description="Nonhelical region 1 (NC1)">
    <location>
        <begin position="665"/>
        <end position="689"/>
    </location>
</feature>
<feature type="compositionally biased region" description="Pro residues" evidence="5">
    <location>
        <begin position="31"/>
        <end position="43"/>
    </location>
</feature>
<feature type="compositionally biased region" description="Low complexity" evidence="5">
    <location>
        <begin position="44"/>
        <end position="56"/>
    </location>
</feature>
<feature type="compositionally biased region" description="Pro residues" evidence="5">
    <location>
        <begin position="106"/>
        <end position="127"/>
    </location>
</feature>
<feature type="compositionally biased region" description="Pro residues" evidence="5">
    <location>
        <begin position="144"/>
        <end position="157"/>
    </location>
</feature>
<feature type="compositionally biased region" description="Gly residues" evidence="5">
    <location>
        <begin position="343"/>
        <end position="352"/>
    </location>
</feature>
<feature type="compositionally biased region" description="Low complexity" evidence="5">
    <location>
        <begin position="353"/>
        <end position="366"/>
    </location>
</feature>
<feature type="compositionally biased region" description="Low complexity" evidence="5">
    <location>
        <begin position="393"/>
        <end position="413"/>
    </location>
</feature>
<feature type="compositionally biased region" description="Pro residues" evidence="5">
    <location>
        <begin position="557"/>
        <end position="566"/>
    </location>
</feature>
<feature type="compositionally biased region" description="Basic and acidic residues" evidence="5">
    <location>
        <begin position="599"/>
        <end position="611"/>
    </location>
</feature>
<feature type="modified residue" description="4-hydroxyproline" evidence="3">
    <location>
        <position position="160"/>
    </location>
</feature>
<feature type="modified residue" description="5-hydroxylysine" evidence="3">
    <location>
        <position position="183"/>
    </location>
</feature>
<feature type="glycosylation site" description="O-linked (Xyl...) (glycosaminoglycan) serine" evidence="3">
    <location>
        <position position="169"/>
    </location>
</feature>
<feature type="glycosylation site" description="O-linked (Gal...) hydroxylysine" evidence="3">
    <location>
        <position position="183"/>
    </location>
</feature>
<feature type="disulfide bond" description="Interchain" evidence="4">
    <location>
        <position position="174"/>
    </location>
</feature>
<feature type="disulfide bond" description="Interchain" evidence="4">
    <location>
        <position position="178"/>
    </location>
</feature>
<feature type="sequence variant" id="VAR_026465" description="In dbSNP:rs2228565." evidence="8">
    <original>T</original>
    <variation>M</variation>
    <location>
        <position position="246"/>
    </location>
</feature>
<feature type="sequence variant" id="VAR_079749" evidence="10">
    <location>
        <begin position="326"/>
        <end position="689"/>
    </location>
</feature>
<feature type="sequence variant" id="VAR_012659" description="In dbSNP:rs2228564." evidence="7 8">
    <original>Q</original>
    <variation>R</variation>
    <location>
        <position position="326"/>
    </location>
</feature>
<feature type="sequence variant" id="VAR_012658" description="In IDD; requires 2 nucleotide substitutions; dbSNP:rs137853213." evidence="7">
    <original>Q</original>
    <variation>W</variation>
    <location>
        <position position="326"/>
    </location>
</feature>
<feature type="sequence variant" id="VAR_026466" description="In dbSNP:rs2228567." evidence="8">
    <original>L</original>
    <variation>V</variation>
    <location>
        <position position="335"/>
    </location>
</feature>
<feature type="sequence variant" id="VAR_020014" description="In dbSNP:rs3737821.">
    <original>V</original>
    <variation>I</variation>
    <location>
        <position position="581"/>
    </location>
</feature>
<feature type="helix" evidence="15">
    <location>
        <begin position="523"/>
        <end position="549"/>
    </location>
</feature>
<reference key="1">
    <citation type="journal article" date="1998" name="Matrix Biol.">
        <title>Human COL9A1 and COL9A2 genes. Two genes of 90 and 15 kb code for similar polypeptides of the same collagen molecule.</title>
        <authorList>
            <person name="Pihlajamaa T."/>
            <person name="Vuoristo M.M."/>
            <person name="Annunen S."/>
            <person name="Peraelae M."/>
            <person name="Prockop D.J."/>
            <person name="Ala-Kokko L."/>
        </authorList>
    </citation>
    <scope>NUCLEOTIDE SEQUENCE [GENOMIC DNA]</scope>
    <source>
        <tissue>Foreskin</tissue>
    </source>
</reference>
<reference key="2">
    <citation type="journal article" date="2006" name="Nature">
        <title>The DNA sequence and biological annotation of human chromosome 1.</title>
        <authorList>
            <person name="Gregory S.G."/>
            <person name="Barlow K.F."/>
            <person name="McLay K.E."/>
            <person name="Kaul R."/>
            <person name="Swarbreck D."/>
            <person name="Dunham A."/>
            <person name="Scott C.E."/>
            <person name="Howe K.L."/>
            <person name="Woodfine K."/>
            <person name="Spencer C.C.A."/>
            <person name="Jones M.C."/>
            <person name="Gillson C."/>
            <person name="Searle S."/>
            <person name="Zhou Y."/>
            <person name="Kokocinski F."/>
            <person name="McDonald L."/>
            <person name="Evans R."/>
            <person name="Phillips K."/>
            <person name="Atkinson A."/>
            <person name="Cooper R."/>
            <person name="Jones C."/>
            <person name="Hall R.E."/>
            <person name="Andrews T.D."/>
            <person name="Lloyd C."/>
            <person name="Ainscough R."/>
            <person name="Almeida J.P."/>
            <person name="Ambrose K.D."/>
            <person name="Anderson F."/>
            <person name="Andrew R.W."/>
            <person name="Ashwell R.I.S."/>
            <person name="Aubin K."/>
            <person name="Babbage A.K."/>
            <person name="Bagguley C.L."/>
            <person name="Bailey J."/>
            <person name="Beasley H."/>
            <person name="Bethel G."/>
            <person name="Bird C.P."/>
            <person name="Bray-Allen S."/>
            <person name="Brown J.Y."/>
            <person name="Brown A.J."/>
            <person name="Buckley D."/>
            <person name="Burton J."/>
            <person name="Bye J."/>
            <person name="Carder C."/>
            <person name="Chapman J.C."/>
            <person name="Clark S.Y."/>
            <person name="Clarke G."/>
            <person name="Clee C."/>
            <person name="Cobley V."/>
            <person name="Collier R.E."/>
            <person name="Corby N."/>
            <person name="Coville G.J."/>
            <person name="Davies J."/>
            <person name="Deadman R."/>
            <person name="Dunn M."/>
            <person name="Earthrowl M."/>
            <person name="Ellington A.G."/>
            <person name="Errington H."/>
            <person name="Frankish A."/>
            <person name="Frankland J."/>
            <person name="French L."/>
            <person name="Garner P."/>
            <person name="Garnett J."/>
            <person name="Gay L."/>
            <person name="Ghori M.R.J."/>
            <person name="Gibson R."/>
            <person name="Gilby L.M."/>
            <person name="Gillett W."/>
            <person name="Glithero R.J."/>
            <person name="Grafham D.V."/>
            <person name="Griffiths C."/>
            <person name="Griffiths-Jones S."/>
            <person name="Grocock R."/>
            <person name="Hammond S."/>
            <person name="Harrison E.S.I."/>
            <person name="Hart E."/>
            <person name="Haugen E."/>
            <person name="Heath P.D."/>
            <person name="Holmes S."/>
            <person name="Holt K."/>
            <person name="Howden P.J."/>
            <person name="Hunt A.R."/>
            <person name="Hunt S.E."/>
            <person name="Hunter G."/>
            <person name="Isherwood J."/>
            <person name="James R."/>
            <person name="Johnson C."/>
            <person name="Johnson D."/>
            <person name="Joy A."/>
            <person name="Kay M."/>
            <person name="Kershaw J.K."/>
            <person name="Kibukawa M."/>
            <person name="Kimberley A.M."/>
            <person name="King A."/>
            <person name="Knights A.J."/>
            <person name="Lad H."/>
            <person name="Laird G."/>
            <person name="Lawlor S."/>
            <person name="Leongamornlert D.A."/>
            <person name="Lloyd D.M."/>
            <person name="Loveland J."/>
            <person name="Lovell J."/>
            <person name="Lush M.J."/>
            <person name="Lyne R."/>
            <person name="Martin S."/>
            <person name="Mashreghi-Mohammadi M."/>
            <person name="Matthews L."/>
            <person name="Matthews N.S.W."/>
            <person name="McLaren S."/>
            <person name="Milne S."/>
            <person name="Mistry S."/>
            <person name="Moore M.J.F."/>
            <person name="Nickerson T."/>
            <person name="O'Dell C.N."/>
            <person name="Oliver K."/>
            <person name="Palmeiri A."/>
            <person name="Palmer S.A."/>
            <person name="Parker A."/>
            <person name="Patel D."/>
            <person name="Pearce A.V."/>
            <person name="Peck A.I."/>
            <person name="Pelan S."/>
            <person name="Phelps K."/>
            <person name="Phillimore B.J."/>
            <person name="Plumb R."/>
            <person name="Rajan J."/>
            <person name="Raymond C."/>
            <person name="Rouse G."/>
            <person name="Saenphimmachak C."/>
            <person name="Sehra H.K."/>
            <person name="Sheridan E."/>
            <person name="Shownkeen R."/>
            <person name="Sims S."/>
            <person name="Skuce C.D."/>
            <person name="Smith M."/>
            <person name="Steward C."/>
            <person name="Subramanian S."/>
            <person name="Sycamore N."/>
            <person name="Tracey A."/>
            <person name="Tromans A."/>
            <person name="Van Helmond Z."/>
            <person name="Wall M."/>
            <person name="Wallis J.M."/>
            <person name="White S."/>
            <person name="Whitehead S.L."/>
            <person name="Wilkinson J.E."/>
            <person name="Willey D.L."/>
            <person name="Williams H."/>
            <person name="Wilming L."/>
            <person name="Wray P.W."/>
            <person name="Wu Z."/>
            <person name="Coulson A."/>
            <person name="Vaudin M."/>
            <person name="Sulston J.E."/>
            <person name="Durbin R.M."/>
            <person name="Hubbard T."/>
            <person name="Wooster R."/>
            <person name="Dunham I."/>
            <person name="Carter N.P."/>
            <person name="McVean G."/>
            <person name="Ross M.T."/>
            <person name="Harrow J."/>
            <person name="Olson M.V."/>
            <person name="Beck S."/>
            <person name="Rogers J."/>
            <person name="Bentley D.R."/>
        </authorList>
    </citation>
    <scope>NUCLEOTIDE SEQUENCE [LARGE SCALE GENOMIC DNA]</scope>
</reference>
<reference key="3">
    <citation type="submission" date="2005-09" db="EMBL/GenBank/DDBJ databases">
        <authorList>
            <person name="Mural R.J."/>
            <person name="Istrail S."/>
            <person name="Sutton G.G."/>
            <person name="Florea L."/>
            <person name="Halpern A.L."/>
            <person name="Mobarry C.M."/>
            <person name="Lippert R."/>
            <person name="Walenz B."/>
            <person name="Shatkay H."/>
            <person name="Dew I."/>
            <person name="Miller J.R."/>
            <person name="Flanigan M.J."/>
            <person name="Edwards N.J."/>
            <person name="Bolanos R."/>
            <person name="Fasulo D."/>
            <person name="Halldorsson B.V."/>
            <person name="Hannenhalli S."/>
            <person name="Turner R."/>
            <person name="Yooseph S."/>
            <person name="Lu F."/>
            <person name="Nusskern D.R."/>
            <person name="Shue B.C."/>
            <person name="Zheng X.H."/>
            <person name="Zhong F."/>
            <person name="Delcher A.L."/>
            <person name="Huson D.H."/>
            <person name="Kravitz S.A."/>
            <person name="Mouchard L."/>
            <person name="Reinert K."/>
            <person name="Remington K.A."/>
            <person name="Clark A.G."/>
            <person name="Waterman M.S."/>
            <person name="Eichler E.E."/>
            <person name="Adams M.D."/>
            <person name="Hunkapiller M.W."/>
            <person name="Myers E.W."/>
            <person name="Venter J.C."/>
        </authorList>
    </citation>
    <scope>NUCLEOTIDE SEQUENCE [LARGE SCALE GENOMIC DNA]</scope>
</reference>
<reference key="4">
    <citation type="journal article" date="2004" name="Genome Res.">
        <title>The status, quality, and expansion of the NIH full-length cDNA project: the Mammalian Gene Collection (MGC).</title>
        <authorList>
            <consortium name="The MGC Project Team"/>
        </authorList>
    </citation>
    <scope>NUCLEOTIDE SEQUENCE [LARGE SCALE MRNA]</scope>
    <source>
        <tissue>Brain</tissue>
    </source>
</reference>
<reference key="5">
    <citation type="journal article" date="1993" name="FEBS Lett.">
        <title>Molecular cloning of the human alpha 2(IX) collagen cDNA and assignment of the human COL9A2 gene to chromosome 1.</title>
        <authorList>
            <person name="Peraelae M."/>
            <person name="Haenninen M."/>
            <person name="Haestbacka J."/>
            <person name="Elima K."/>
            <person name="Vuorio E."/>
        </authorList>
    </citation>
    <scope>NUCLEOTIDE SEQUENCE [MRNA] OF 50-668</scope>
    <source>
        <tissue>Cartilage</tissue>
    </source>
</reference>
<reference key="6">
    <citation type="journal article" date="1999" name="Am. J. Hum. Genet.">
        <title>Identification of novel pro-alpha2(IX) collagen gene mutations in two families with distinctive oligo-epiphyseal forms of multiple epiphyseal dysplasia.</title>
        <authorList>
            <person name="Holden P."/>
            <person name="Canty E.G."/>
            <person name="Mortier G.R."/>
            <person name="Zabel B."/>
            <person name="Spranger J."/>
            <person name="Carr A."/>
            <person name="Grant M.E."/>
            <person name="Loughlin J.A."/>
            <person name="Briggs M.D."/>
        </authorList>
    </citation>
    <scope>INVOLVEMENT IN EDM2</scope>
</reference>
<reference key="7">
    <citation type="journal article" date="2011" name="Am. J. Med. Genet. A">
        <title>A loss of function mutation in the COL9A2 gene causes autosomal recessive Stickler syndrome.</title>
        <authorList>
            <person name="Baker S."/>
            <person name="Booth C."/>
            <person name="Fillman C."/>
            <person name="Shapiro M."/>
            <person name="Blair M.P."/>
            <person name="Hyland J.C."/>
            <person name="Ala-Kokko L."/>
        </authorList>
    </citation>
    <scope>INVOLVEMENT IN STL5</scope>
</reference>
<reference key="8">
    <citation type="journal article" date="2019" name="Am. J. Med. Genet. A">
        <title>Homozygous Type IX collagen variants (COL9A1, COL9A2, and COL9A3) causing recessive Stickler syndrome-Expanding the phenotype.</title>
        <authorList>
            <person name="Nixon T.R.W."/>
            <person name="Alexander P."/>
            <person name="Richards A."/>
            <person name="McNinch A."/>
            <person name="Bearcroft P.W.P."/>
            <person name="Cobben J."/>
            <person name="Snead M.P."/>
        </authorList>
    </citation>
    <scope>INVOLVEMENT IN STL5</scope>
</reference>
<reference key="9">
    <citation type="journal article" date="2021" name="Ophthalmic Genet.">
        <title>Autosomal recessive Stickler syndrome associated with homozygous mutations in the COL9A2 gene.</title>
        <authorList>
            <person name="Kjellstroem U."/>
            <person name="Martell S."/>
            <person name="Brobeck C."/>
            <person name="Andreasson S."/>
        </authorList>
    </citation>
    <scope>INVOLVEMENT IN STL5</scope>
</reference>
<reference key="10">
    <citation type="journal article" date="1999" name="Science">
        <title>An allele of COL9A2 associated with intervertebral disc disease.</title>
        <authorList>
            <person name="Annunen S."/>
            <person name="Paassilta P."/>
            <person name="Lohiniva J."/>
            <person name="Peraelae M."/>
            <person name="Pihlajamaa T."/>
            <person name="Karppinen J."/>
            <person name="Tervonen O."/>
            <person name="Kroeger H."/>
            <person name="Laehde S."/>
            <person name="Vanharanta H."/>
            <person name="Ryhaenen L."/>
            <person name="Goering H.H.H."/>
            <person name="Ott J."/>
            <person name="Prockop D.J."/>
            <person name="Ala-Kokko L."/>
        </authorList>
    </citation>
    <scope>VARIANT IDD TRP-326</scope>
    <scope>VARIANT ARG-326</scope>
</reference>
<reference key="11">
    <citation type="journal article" date="2001" name="Am. J. Hum. Genet.">
        <title>A mutation in COL9A1 causes multiple epiphyseal dysplasia: further evidence for locus heterogeneity.</title>
        <authorList>
            <person name="Czarny-Ratajczak M."/>
            <person name="Lohiniva J."/>
            <person name="Rogala P."/>
            <person name="Kozlowski K."/>
            <person name="Peraelae M."/>
            <person name="Carter L."/>
            <person name="Spector T.D."/>
            <person name="Kolodziej L."/>
            <person name="Seppaenen U."/>
            <person name="Glazar R."/>
            <person name="Krolewski J."/>
            <person name="Latos-Bielenska A."/>
            <person name="Ala-Kokko L."/>
        </authorList>
    </citation>
    <scope>VARIANTS MET-246; ARG-326 AND VAL-335</scope>
</reference>
<reference key="12">
    <citation type="journal article" date="2017" name="Hum. Mutat.">
        <title>Mutations in KARS cause early-onset hearing loss and leukoencephalopathy: Potential pathogenic mechanism.</title>
        <authorList>
            <person name="Zhou X.L."/>
            <person name="He L.X."/>
            <person name="Yu L.J."/>
            <person name="Wang Y."/>
            <person name="Wang X.J."/>
            <person name="Wang E.D."/>
            <person name="Yang T."/>
        </authorList>
    </citation>
    <scope>VARIANT 326-GLN--PRO-689 DEL</scope>
</reference>
<proteinExistence type="evidence at protein level"/>
<dbReference type="EMBL" id="AF019406">
    <property type="protein sequence ID" value="AAC33512.1"/>
    <property type="molecule type" value="Genomic_DNA"/>
</dbReference>
<dbReference type="EMBL" id="AL050341">
    <property type="status" value="NOT_ANNOTATED_CDS"/>
    <property type="molecule type" value="Genomic_DNA"/>
</dbReference>
<dbReference type="EMBL" id="CH471059">
    <property type="protein sequence ID" value="EAX07229.1"/>
    <property type="molecule type" value="Genomic_DNA"/>
</dbReference>
<dbReference type="EMBL" id="BC136326">
    <property type="protein sequence ID" value="AAI36327.1"/>
    <property type="molecule type" value="mRNA"/>
</dbReference>
<dbReference type="EMBL" id="BC136327">
    <property type="protein sequence ID" value="AAI36328.1"/>
    <property type="molecule type" value="mRNA"/>
</dbReference>
<dbReference type="EMBL" id="M95610">
    <property type="protein sequence ID" value="AAA80977.1"/>
    <property type="molecule type" value="mRNA"/>
</dbReference>
<dbReference type="CCDS" id="CCDS450.1"/>
<dbReference type="PIR" id="S32436">
    <property type="entry name" value="S32436"/>
</dbReference>
<dbReference type="RefSeq" id="NP_001843.1">
    <property type="nucleotide sequence ID" value="NM_001852.4"/>
</dbReference>
<dbReference type="RefSeq" id="XP_006710428.1">
    <property type="nucleotide sequence ID" value="XM_006710365.3"/>
</dbReference>
<dbReference type="PDB" id="5CTD">
    <property type="method" value="X-ray"/>
    <property type="resolution" value="1.60 A"/>
    <property type="chains" value="B=517-552"/>
</dbReference>
<dbReference type="PDB" id="5CTI">
    <property type="method" value="X-ray"/>
    <property type="resolution" value="1.90 A"/>
    <property type="chains" value="B=517-552"/>
</dbReference>
<dbReference type="PDB" id="5CVA">
    <property type="method" value="X-ray"/>
    <property type="resolution" value="2.10 A"/>
    <property type="chains" value="B/E=517-552"/>
</dbReference>
<dbReference type="PDB" id="5CVB">
    <property type="method" value="X-ray"/>
    <property type="resolution" value="2.25 A"/>
    <property type="chains" value="B/E=517-552"/>
</dbReference>
<dbReference type="PDBsum" id="5CTD"/>
<dbReference type="PDBsum" id="5CTI"/>
<dbReference type="PDBsum" id="5CVA"/>
<dbReference type="PDBsum" id="5CVB"/>
<dbReference type="SMR" id="Q14055"/>
<dbReference type="BioGRID" id="107695">
    <property type="interactions" value="14"/>
</dbReference>
<dbReference type="ComplexPortal" id="CPX-1748">
    <property type="entry name" value="Collagen type IX trimer"/>
</dbReference>
<dbReference type="FunCoup" id="Q14055">
    <property type="interactions" value="565"/>
</dbReference>
<dbReference type="IntAct" id="Q14055">
    <property type="interactions" value="10"/>
</dbReference>
<dbReference type="STRING" id="9606.ENSP00000361834"/>
<dbReference type="GlyCosmos" id="Q14055">
    <property type="glycosylation" value="2 sites, No reported glycans"/>
</dbReference>
<dbReference type="GlyGen" id="Q14055">
    <property type="glycosylation" value="4 sites, 1 O-linked glycan (1 site)"/>
</dbReference>
<dbReference type="iPTMnet" id="Q14055"/>
<dbReference type="PhosphoSitePlus" id="Q14055"/>
<dbReference type="BioMuta" id="COL9A2"/>
<dbReference type="DMDM" id="20137328"/>
<dbReference type="jPOST" id="Q14055"/>
<dbReference type="MassIVE" id="Q14055"/>
<dbReference type="PaxDb" id="9606-ENSP00000361834"/>
<dbReference type="PeptideAtlas" id="Q14055"/>
<dbReference type="ProteomicsDB" id="59804"/>
<dbReference type="Pumba" id="Q14055"/>
<dbReference type="TopDownProteomics" id="Q14055"/>
<dbReference type="Antibodypedia" id="64754">
    <property type="antibodies" value="30 antibodies from 13 providers"/>
</dbReference>
<dbReference type="DNASU" id="1298"/>
<dbReference type="Ensembl" id="ENST00000372748.8">
    <property type="protein sequence ID" value="ENSP00000361834.3"/>
    <property type="gene ID" value="ENSG00000049089.15"/>
</dbReference>
<dbReference type="GeneID" id="1298"/>
<dbReference type="KEGG" id="hsa:1298"/>
<dbReference type="MANE-Select" id="ENST00000372748.8">
    <property type="protein sequence ID" value="ENSP00000361834.3"/>
    <property type="RefSeq nucleotide sequence ID" value="NM_001852.4"/>
    <property type="RefSeq protein sequence ID" value="NP_001843.1"/>
</dbReference>
<dbReference type="UCSC" id="uc001cfh.2">
    <property type="organism name" value="human"/>
</dbReference>
<dbReference type="AGR" id="HGNC:2218"/>
<dbReference type="CTD" id="1298"/>
<dbReference type="DisGeNET" id="1298"/>
<dbReference type="GeneCards" id="COL9A2"/>
<dbReference type="GeneReviews" id="COL9A2"/>
<dbReference type="HGNC" id="HGNC:2218">
    <property type="gene designation" value="COL9A2"/>
</dbReference>
<dbReference type="HPA" id="ENSG00000049089">
    <property type="expression patterns" value="Group enriched (brain, pituitary gland)"/>
</dbReference>
<dbReference type="MalaCards" id="COL9A2"/>
<dbReference type="MIM" id="120260">
    <property type="type" value="gene"/>
</dbReference>
<dbReference type="MIM" id="600204">
    <property type="type" value="phenotype"/>
</dbReference>
<dbReference type="MIM" id="603932">
    <property type="type" value="phenotype"/>
</dbReference>
<dbReference type="MIM" id="614284">
    <property type="type" value="phenotype"/>
</dbReference>
<dbReference type="neXtProt" id="NX_Q14055"/>
<dbReference type="OpenTargets" id="ENSG00000049089"/>
<dbReference type="Orphanet" id="250984">
    <property type="disease" value="Autosomal recessive Stickler syndrome"/>
</dbReference>
<dbReference type="Orphanet" id="166002">
    <property type="disease" value="Multiple epiphyseal dysplasia due to collagen 9 anomaly"/>
</dbReference>
<dbReference type="PharmGKB" id="PA26734"/>
<dbReference type="VEuPathDB" id="HostDB:ENSG00000049089"/>
<dbReference type="eggNOG" id="KOG3544">
    <property type="taxonomic scope" value="Eukaryota"/>
</dbReference>
<dbReference type="GeneTree" id="ENSGT00940000161290"/>
<dbReference type="HOGENOM" id="CLU_001074_18_2_1"/>
<dbReference type="InParanoid" id="Q14055"/>
<dbReference type="OMA" id="MIGGPGQ"/>
<dbReference type="OrthoDB" id="8956848at2759"/>
<dbReference type="PAN-GO" id="Q14055">
    <property type="GO annotations" value="4 GO annotations based on evolutionary models"/>
</dbReference>
<dbReference type="PhylomeDB" id="Q14055"/>
<dbReference type="PathwayCommons" id="Q14055"/>
<dbReference type="Reactome" id="R-HSA-1442490">
    <property type="pathway name" value="Collagen degradation"/>
</dbReference>
<dbReference type="Reactome" id="R-HSA-1650814">
    <property type="pathway name" value="Collagen biosynthesis and modifying enzymes"/>
</dbReference>
<dbReference type="Reactome" id="R-HSA-186797">
    <property type="pathway name" value="Signaling by PDGF"/>
</dbReference>
<dbReference type="Reactome" id="R-HSA-2022090">
    <property type="pathway name" value="Assembly of collagen fibrils and other multimeric structures"/>
</dbReference>
<dbReference type="Reactome" id="R-HSA-216083">
    <property type="pathway name" value="Integrin cell surface interactions"/>
</dbReference>
<dbReference type="Reactome" id="R-HSA-3000178">
    <property type="pathway name" value="ECM proteoglycans"/>
</dbReference>
<dbReference type="Reactome" id="R-HSA-419037">
    <property type="pathway name" value="NCAM1 interactions"/>
</dbReference>
<dbReference type="Reactome" id="R-HSA-8948216">
    <property type="pathway name" value="Collagen chain trimerization"/>
</dbReference>
<dbReference type="SignaLink" id="Q14055"/>
<dbReference type="SIGNOR" id="Q14055"/>
<dbReference type="BioGRID-ORCS" id="1298">
    <property type="hits" value="11 hits in 1144 CRISPR screens"/>
</dbReference>
<dbReference type="ChiTaRS" id="COL9A2">
    <property type="organism name" value="human"/>
</dbReference>
<dbReference type="GeneWiki" id="COL9A2"/>
<dbReference type="GenomeRNAi" id="1298"/>
<dbReference type="Pharos" id="Q14055">
    <property type="development level" value="Tbio"/>
</dbReference>
<dbReference type="PRO" id="PR:Q14055"/>
<dbReference type="Proteomes" id="UP000005640">
    <property type="component" value="Chromosome 1"/>
</dbReference>
<dbReference type="RNAct" id="Q14055">
    <property type="molecule type" value="protein"/>
</dbReference>
<dbReference type="Bgee" id="ENSG00000049089">
    <property type="expression patterns" value="Expressed in C1 segment of cervical spinal cord and 137 other cell types or tissues"/>
</dbReference>
<dbReference type="ExpressionAtlas" id="Q14055">
    <property type="expression patterns" value="baseline and differential"/>
</dbReference>
<dbReference type="GO" id="GO:0005594">
    <property type="term" value="C:collagen type IX trimer"/>
    <property type="evidence" value="ECO:0000314"/>
    <property type="project" value="BHF-UCL"/>
</dbReference>
<dbReference type="GO" id="GO:0062023">
    <property type="term" value="C:collagen-containing extracellular matrix"/>
    <property type="evidence" value="ECO:0007005"/>
    <property type="project" value="BHF-UCL"/>
</dbReference>
<dbReference type="GO" id="GO:0005788">
    <property type="term" value="C:endoplasmic reticulum lumen"/>
    <property type="evidence" value="ECO:0000304"/>
    <property type="project" value="Reactome"/>
</dbReference>
<dbReference type="GO" id="GO:0005576">
    <property type="term" value="C:extracellular region"/>
    <property type="evidence" value="ECO:0000304"/>
    <property type="project" value="Reactome"/>
</dbReference>
<dbReference type="GO" id="GO:0005615">
    <property type="term" value="C:extracellular space"/>
    <property type="evidence" value="ECO:0000318"/>
    <property type="project" value="GO_Central"/>
</dbReference>
<dbReference type="GO" id="GO:0030020">
    <property type="term" value="F:extracellular matrix structural constituent conferring tensile strength"/>
    <property type="evidence" value="ECO:0000318"/>
    <property type="project" value="GO_Central"/>
</dbReference>
<dbReference type="GO" id="GO:0042803">
    <property type="term" value="F:protein homodimerization activity"/>
    <property type="evidence" value="ECO:0000353"/>
    <property type="project" value="BHF-UCL"/>
</dbReference>
<dbReference type="GO" id="GO:0001501">
    <property type="term" value="P:skeletal system development"/>
    <property type="evidence" value="ECO:0000304"/>
    <property type="project" value="ProtInc"/>
</dbReference>
<dbReference type="InterPro" id="IPR008160">
    <property type="entry name" value="Collagen"/>
</dbReference>
<dbReference type="InterPro" id="IPR050149">
    <property type="entry name" value="Collagen_superfamily"/>
</dbReference>
<dbReference type="PANTHER" id="PTHR24023">
    <property type="entry name" value="COLLAGEN ALPHA"/>
    <property type="match status" value="1"/>
</dbReference>
<dbReference type="PANTHER" id="PTHR24023:SF891">
    <property type="entry name" value="COLLAGEN ALPHA-1(XVII) CHAIN"/>
    <property type="match status" value="1"/>
</dbReference>
<dbReference type="Pfam" id="PF01391">
    <property type="entry name" value="Collagen"/>
    <property type="match status" value="8"/>
</dbReference>
<organism>
    <name type="scientific">Homo sapiens</name>
    <name type="common">Human</name>
    <dbReference type="NCBI Taxonomy" id="9606"/>
    <lineage>
        <taxon>Eukaryota</taxon>
        <taxon>Metazoa</taxon>
        <taxon>Chordata</taxon>
        <taxon>Craniata</taxon>
        <taxon>Vertebrata</taxon>
        <taxon>Euteleostomi</taxon>
        <taxon>Mammalia</taxon>
        <taxon>Eutheria</taxon>
        <taxon>Euarchontoglires</taxon>
        <taxon>Primates</taxon>
        <taxon>Haplorrhini</taxon>
        <taxon>Catarrhini</taxon>
        <taxon>Hominidae</taxon>
        <taxon>Homo</taxon>
    </lineage>
</organism>
<keyword id="KW-0002">3D-structure</keyword>
<keyword id="KW-0176">Collagen</keyword>
<keyword id="KW-0209">Deafness</keyword>
<keyword id="KW-0225">Disease variant</keyword>
<keyword id="KW-1015">Disulfide bond</keyword>
<keyword id="KW-0242">Dwarfism</keyword>
<keyword id="KW-0272">Extracellular matrix</keyword>
<keyword id="KW-0325">Glycoprotein</keyword>
<keyword id="KW-0379">Hydroxylation</keyword>
<keyword id="KW-0654">Proteoglycan</keyword>
<keyword id="KW-1267">Proteomics identification</keyword>
<keyword id="KW-1185">Reference proteome</keyword>
<keyword id="KW-0677">Repeat</keyword>
<keyword id="KW-0964">Secreted</keyword>
<keyword id="KW-0732">Signal</keyword>
<keyword id="KW-0757">Stickler syndrome</keyword>
<accession>Q14055</accession>
<accession>B2RMP9</accession>